<sequence>MARHVFLTGPPGVGKTTLIHKASEVLKSSGVPVDGFYTEEVRQGGRRIGFDVVTLSGTRGPLSRVGLEPPPGKRECRVGQYVVDLTSFEQLALPVLRNADCSSGPGQRVCVIDEIGKMELFSQLFIQAVRQTLSTPGTIILGTIPVPKGKPLALVEEIRNRKDVKVFNVTKENRNHLLPDIVTCVQSSRK</sequence>
<name>NTPCR_HUMAN</name>
<accession>Q9BSD7</accession>
<gene>
    <name evidence="4" type="primary">NTPCR</name>
    <name type="synonym">C1orf57</name>
</gene>
<proteinExistence type="evidence at protein level"/>
<reference key="1">
    <citation type="submission" date="2001-09" db="EMBL/GenBank/DDBJ databases">
        <authorList>
            <person name="Kang L."/>
            <person name="Zhang B."/>
            <person name="Zhou Y."/>
            <person name="Peng X."/>
            <person name="Yuan J."/>
            <person name="Qiang B."/>
        </authorList>
    </citation>
    <scope>NUCLEOTIDE SEQUENCE [MRNA]</scope>
    <source>
        <tissue>Fetal brain</tissue>
    </source>
</reference>
<reference key="2">
    <citation type="journal article" date="2004" name="Genome Res.">
        <title>The status, quality, and expansion of the NIH full-length cDNA project: the Mammalian Gene Collection (MGC).</title>
        <authorList>
            <consortium name="The MGC Project Team"/>
        </authorList>
    </citation>
    <scope>NUCLEOTIDE SEQUENCE [LARGE SCALE MRNA]</scope>
    <source>
        <tissue>Skin</tissue>
    </source>
</reference>
<reference key="3">
    <citation type="journal article" date="2009" name="Anal. Chem.">
        <title>Lys-N and trypsin cover complementary parts of the phosphoproteome in a refined SCX-based approach.</title>
        <authorList>
            <person name="Gauci S."/>
            <person name="Helbig A.O."/>
            <person name="Slijper M."/>
            <person name="Krijgsveld J."/>
            <person name="Heck A.J."/>
            <person name="Mohammed S."/>
        </authorList>
    </citation>
    <scope>ACETYLATION [LARGE SCALE ANALYSIS] AT ALA-2</scope>
    <scope>CLEAVAGE OF INITIATOR METHIONINE [LARGE SCALE ANALYSIS]</scope>
    <scope>IDENTIFICATION BY MASS SPECTROMETRY [LARGE SCALE ANALYSIS]</scope>
</reference>
<reference key="4">
    <citation type="journal article" date="2009" name="Science">
        <title>Lysine acetylation targets protein complexes and co-regulates major cellular functions.</title>
        <authorList>
            <person name="Choudhary C."/>
            <person name="Kumar C."/>
            <person name="Gnad F."/>
            <person name="Nielsen M.L."/>
            <person name="Rehman M."/>
            <person name="Walther T.C."/>
            <person name="Olsen J.V."/>
            <person name="Mann M."/>
        </authorList>
    </citation>
    <scope>ACETYLATION [LARGE SCALE ANALYSIS] AT LYS-165</scope>
    <scope>IDENTIFICATION BY MASS SPECTROMETRY [LARGE SCALE ANALYSIS]</scope>
</reference>
<reference key="5">
    <citation type="journal article" date="2011" name="BMC Syst. Biol.">
        <title>Initial characterization of the human central proteome.</title>
        <authorList>
            <person name="Burkard T.R."/>
            <person name="Planyavsky M."/>
            <person name="Kaupe I."/>
            <person name="Breitwieser F.P."/>
            <person name="Buerckstuemmer T."/>
            <person name="Bennett K.L."/>
            <person name="Superti-Furga G."/>
            <person name="Colinge J."/>
        </authorList>
    </citation>
    <scope>IDENTIFICATION BY MASS SPECTROMETRY [LARGE SCALE ANALYSIS]</scope>
</reference>
<reference key="6">
    <citation type="journal article" date="2015" name="Proteomics">
        <title>N-terminome analysis of the human mitochondrial proteome.</title>
        <authorList>
            <person name="Vaca Jacome A.S."/>
            <person name="Rabilloud T."/>
            <person name="Schaeffer-Reiss C."/>
            <person name="Rompais M."/>
            <person name="Ayoub D."/>
            <person name="Lane L."/>
            <person name="Bairoch A."/>
            <person name="Van Dorsselaer A."/>
            <person name="Carapito C."/>
        </authorList>
    </citation>
    <scope>IDENTIFICATION BY MASS SPECTROMETRY [LARGE SCALE ANALYSIS]</scope>
</reference>
<reference key="7">
    <citation type="journal article" date="2007" name="J. Mol. Biol.">
        <title>NMR structure and functional characterization of a human cancer-related nucleoside triphosphatase.</title>
        <authorList>
            <person name="Placzek W.J."/>
            <person name="Almeida M.S."/>
            <person name="Wuethrich K."/>
        </authorList>
    </citation>
    <scope>STRUCTURE BY NMR IN COMPLEX WITH THE ATP ANALOG ADENOSINE 5'-O-(3-THIOTRIPHOSPHATE)</scope>
    <scope>FUNCTION</scope>
    <scope>BIOPHYSICOCHEMICAL PROPERTIES</scope>
    <scope>SUBUNIT</scope>
    <scope>MUTAGENESIS OF GLU-114 AND GLY-116</scope>
    <scope>CATALYTIC ACTIVITY</scope>
</reference>
<protein>
    <recommendedName>
        <fullName evidence="2">Cancer-related nucleoside-triphosphatase</fullName>
        <shortName>NTPase</shortName>
        <ecNumber evidence="1">3.6.1.15</ecNumber>
    </recommendedName>
    <alternativeName>
        <fullName>Nucleoside triphosphate phosphohydrolase</fullName>
    </alternativeName>
</protein>
<dbReference type="EC" id="3.6.1.15" evidence="1"/>
<dbReference type="EMBL" id="AF416713">
    <property type="protein sequence ID" value="AAL16807.1"/>
    <property type="molecule type" value="mRNA"/>
</dbReference>
<dbReference type="EMBL" id="BC005102">
    <property type="protein sequence ID" value="AAH05102.1"/>
    <property type="molecule type" value="mRNA"/>
</dbReference>
<dbReference type="CCDS" id="CCDS1597.1"/>
<dbReference type="RefSeq" id="NP_001316382.1">
    <property type="nucleotide sequence ID" value="NM_001329453.1"/>
</dbReference>
<dbReference type="RefSeq" id="NP_115700.1">
    <property type="nucleotide sequence ID" value="NM_032324.3"/>
</dbReference>
<dbReference type="PDB" id="2I3B">
    <property type="method" value="NMR"/>
    <property type="chains" value="A=2-190"/>
</dbReference>
<dbReference type="PDBsum" id="2I3B"/>
<dbReference type="BMRB" id="Q9BSD7"/>
<dbReference type="SMR" id="Q9BSD7"/>
<dbReference type="BioGRID" id="124011">
    <property type="interactions" value="154"/>
</dbReference>
<dbReference type="FunCoup" id="Q9BSD7">
    <property type="interactions" value="410"/>
</dbReference>
<dbReference type="IntAct" id="Q9BSD7">
    <property type="interactions" value="72"/>
</dbReference>
<dbReference type="MINT" id="Q9BSD7"/>
<dbReference type="STRING" id="9606.ENSP00000355587"/>
<dbReference type="ChEMBL" id="CHEMBL4295936"/>
<dbReference type="GlyGen" id="Q9BSD7">
    <property type="glycosylation" value="1 site, 1 O-linked glycan (1 site)"/>
</dbReference>
<dbReference type="iPTMnet" id="Q9BSD7"/>
<dbReference type="PhosphoSitePlus" id="Q9BSD7"/>
<dbReference type="SwissPalm" id="Q9BSD7"/>
<dbReference type="BioMuta" id="NTPCR"/>
<dbReference type="DMDM" id="54036528"/>
<dbReference type="jPOST" id="Q9BSD7"/>
<dbReference type="MassIVE" id="Q9BSD7"/>
<dbReference type="PaxDb" id="9606-ENSP00000355587"/>
<dbReference type="PeptideAtlas" id="Q9BSD7"/>
<dbReference type="ProteomicsDB" id="78879"/>
<dbReference type="Pumba" id="Q9BSD7"/>
<dbReference type="Antibodypedia" id="34690">
    <property type="antibodies" value="154 antibodies from 27 providers"/>
</dbReference>
<dbReference type="DNASU" id="84284"/>
<dbReference type="Ensembl" id="ENST00000366628.10">
    <property type="protein sequence ID" value="ENSP00000355587.4"/>
    <property type="gene ID" value="ENSG00000135778.12"/>
</dbReference>
<dbReference type="GeneID" id="84284"/>
<dbReference type="KEGG" id="hsa:84284"/>
<dbReference type="MANE-Select" id="ENST00000366628.10">
    <property type="protein sequence ID" value="ENSP00000355587.4"/>
    <property type="RefSeq nucleotide sequence ID" value="NM_032324.3"/>
    <property type="RefSeq protein sequence ID" value="NP_115700.1"/>
</dbReference>
<dbReference type="UCSC" id="uc001hvj.2">
    <property type="organism name" value="human"/>
</dbReference>
<dbReference type="AGR" id="HGNC:28204"/>
<dbReference type="CTD" id="84284"/>
<dbReference type="DisGeNET" id="84284"/>
<dbReference type="GeneCards" id="NTPCR"/>
<dbReference type="HGNC" id="HGNC:28204">
    <property type="gene designation" value="NTPCR"/>
</dbReference>
<dbReference type="HPA" id="ENSG00000135778">
    <property type="expression patterns" value="Low tissue specificity"/>
</dbReference>
<dbReference type="neXtProt" id="NX_Q9BSD7"/>
<dbReference type="OpenTargets" id="ENSG00000135778"/>
<dbReference type="PharmGKB" id="PA142672508"/>
<dbReference type="VEuPathDB" id="HostDB:ENSG00000135778"/>
<dbReference type="eggNOG" id="ENOG502QVJ8">
    <property type="taxonomic scope" value="Eukaryota"/>
</dbReference>
<dbReference type="GeneTree" id="ENSGT00390000018683"/>
<dbReference type="HOGENOM" id="CLU_103145_1_0_1"/>
<dbReference type="InParanoid" id="Q9BSD7"/>
<dbReference type="OMA" id="VTAVQNC"/>
<dbReference type="OrthoDB" id="446244at2759"/>
<dbReference type="PAN-GO" id="Q9BSD7">
    <property type="GO annotations" value="0 GO annotations based on evolutionary models"/>
</dbReference>
<dbReference type="PhylomeDB" id="Q9BSD7"/>
<dbReference type="TreeFam" id="TF323592"/>
<dbReference type="BioCyc" id="MetaCyc:HS06064-MONOMER"/>
<dbReference type="PathwayCommons" id="Q9BSD7"/>
<dbReference type="SABIO-RK" id="Q9BSD7"/>
<dbReference type="SignaLink" id="Q9BSD7"/>
<dbReference type="BioGRID-ORCS" id="84284">
    <property type="hits" value="9 hits in 1150 CRISPR screens"/>
</dbReference>
<dbReference type="ChiTaRS" id="NTPCR">
    <property type="organism name" value="human"/>
</dbReference>
<dbReference type="EvolutionaryTrace" id="Q9BSD7"/>
<dbReference type="GenomeRNAi" id="84284"/>
<dbReference type="Pharos" id="Q9BSD7">
    <property type="development level" value="Tbio"/>
</dbReference>
<dbReference type="PRO" id="PR:Q9BSD7"/>
<dbReference type="Proteomes" id="UP000005640">
    <property type="component" value="Chromosome 1"/>
</dbReference>
<dbReference type="RNAct" id="Q9BSD7">
    <property type="molecule type" value="protein"/>
</dbReference>
<dbReference type="Bgee" id="ENSG00000135778">
    <property type="expression patterns" value="Expressed in pancreatic ductal cell and 182 other cell types or tissues"/>
</dbReference>
<dbReference type="ExpressionAtlas" id="Q9BSD7">
    <property type="expression patterns" value="baseline and differential"/>
</dbReference>
<dbReference type="GO" id="GO:0016020">
    <property type="term" value="C:membrane"/>
    <property type="evidence" value="ECO:0007005"/>
    <property type="project" value="UniProtKB"/>
</dbReference>
<dbReference type="GO" id="GO:0005739">
    <property type="term" value="C:mitochondrion"/>
    <property type="evidence" value="ECO:0006056"/>
    <property type="project" value="FlyBase"/>
</dbReference>
<dbReference type="GO" id="GO:0005524">
    <property type="term" value="F:ATP binding"/>
    <property type="evidence" value="ECO:0007669"/>
    <property type="project" value="UniProtKB-KW"/>
</dbReference>
<dbReference type="GO" id="GO:0016887">
    <property type="term" value="F:ATP hydrolysis activity"/>
    <property type="evidence" value="ECO:0007669"/>
    <property type="project" value="InterPro"/>
</dbReference>
<dbReference type="GO" id="GO:0043273">
    <property type="term" value="F:CTPase activity"/>
    <property type="evidence" value="ECO:0007669"/>
    <property type="project" value="RHEA"/>
</dbReference>
<dbReference type="GO" id="GO:0003924">
    <property type="term" value="F:GTPase activity"/>
    <property type="evidence" value="ECO:0007669"/>
    <property type="project" value="RHEA"/>
</dbReference>
<dbReference type="GO" id="GO:0017111">
    <property type="term" value="F:ribonucleoside triphosphate phosphatase activity"/>
    <property type="evidence" value="ECO:0000315"/>
    <property type="project" value="UniProtKB"/>
</dbReference>
<dbReference type="GO" id="GO:0003723">
    <property type="term" value="F:RNA binding"/>
    <property type="evidence" value="ECO:0007005"/>
    <property type="project" value="UniProtKB"/>
</dbReference>
<dbReference type="CDD" id="cd19482">
    <property type="entry name" value="RecA-like_Thep1"/>
    <property type="match status" value="1"/>
</dbReference>
<dbReference type="FunFam" id="3.40.50.300:FF:002319">
    <property type="entry name" value="Cancer-related nucleoside-triphosphatase"/>
    <property type="match status" value="1"/>
</dbReference>
<dbReference type="Gene3D" id="3.40.50.300">
    <property type="entry name" value="P-loop containing nucleotide triphosphate hydrolases"/>
    <property type="match status" value="1"/>
</dbReference>
<dbReference type="HAMAP" id="MF_00796">
    <property type="entry name" value="NTPase_1"/>
    <property type="match status" value="1"/>
</dbReference>
<dbReference type="InterPro" id="IPR003593">
    <property type="entry name" value="AAA+_ATPase"/>
</dbReference>
<dbReference type="InterPro" id="IPR004948">
    <property type="entry name" value="Nuc-triphosphatase_THEP1"/>
</dbReference>
<dbReference type="InterPro" id="IPR027417">
    <property type="entry name" value="P-loop_NTPase"/>
</dbReference>
<dbReference type="NCBIfam" id="NF010248">
    <property type="entry name" value="PRK13695.1"/>
    <property type="match status" value="1"/>
</dbReference>
<dbReference type="PANTHER" id="PTHR43146">
    <property type="entry name" value="CANCER-RELATED NUCLEOSIDE-TRIPHOSPHATASE"/>
    <property type="match status" value="1"/>
</dbReference>
<dbReference type="PANTHER" id="PTHR43146:SF1">
    <property type="entry name" value="CANCER-RELATED NUCLEOSIDE-TRIPHOSPHATASE"/>
    <property type="match status" value="1"/>
</dbReference>
<dbReference type="Pfam" id="PF03266">
    <property type="entry name" value="NTPase_1"/>
    <property type="match status" value="1"/>
</dbReference>
<dbReference type="SMART" id="SM00382">
    <property type="entry name" value="AAA"/>
    <property type="match status" value="1"/>
</dbReference>
<dbReference type="SUPFAM" id="SSF52540">
    <property type="entry name" value="P-loop containing nucleoside triphosphate hydrolases"/>
    <property type="match status" value="1"/>
</dbReference>
<organism>
    <name type="scientific">Homo sapiens</name>
    <name type="common">Human</name>
    <dbReference type="NCBI Taxonomy" id="9606"/>
    <lineage>
        <taxon>Eukaryota</taxon>
        <taxon>Metazoa</taxon>
        <taxon>Chordata</taxon>
        <taxon>Craniata</taxon>
        <taxon>Vertebrata</taxon>
        <taxon>Euteleostomi</taxon>
        <taxon>Mammalia</taxon>
        <taxon>Eutheria</taxon>
        <taxon>Euarchontoglires</taxon>
        <taxon>Primates</taxon>
        <taxon>Haplorrhini</taxon>
        <taxon>Catarrhini</taxon>
        <taxon>Hominidae</taxon>
        <taxon>Homo</taxon>
    </lineage>
</organism>
<evidence type="ECO:0000269" key="1">
    <source>
    </source>
</evidence>
<evidence type="ECO:0000305" key="2"/>
<evidence type="ECO:0000305" key="3">
    <source>
    </source>
</evidence>
<evidence type="ECO:0000312" key="4">
    <source>
        <dbReference type="HGNC" id="HGNC:28204"/>
    </source>
</evidence>
<evidence type="ECO:0007744" key="5">
    <source>
    </source>
</evidence>
<evidence type="ECO:0007744" key="6">
    <source>
    </source>
</evidence>
<evidence type="ECO:0007829" key="7">
    <source>
        <dbReference type="PDB" id="2I3B"/>
    </source>
</evidence>
<keyword id="KW-0002">3D-structure</keyword>
<keyword id="KW-0007">Acetylation</keyword>
<keyword id="KW-0067">ATP-binding</keyword>
<keyword id="KW-0378">Hydrolase</keyword>
<keyword id="KW-0547">Nucleotide-binding</keyword>
<keyword id="KW-1267">Proteomics identification</keyword>
<keyword id="KW-1185">Reference proteome</keyword>
<feature type="initiator methionine" description="Removed" evidence="5">
    <location>
        <position position="1"/>
    </location>
</feature>
<feature type="chain" id="PRO_0000146711" description="Cancer-related nucleoside-triphosphatase">
    <location>
        <begin position="2"/>
        <end position="190"/>
    </location>
</feature>
<feature type="binding site" evidence="2">
    <location>
        <begin position="9"/>
        <end position="16"/>
    </location>
    <ligand>
        <name>ATP</name>
        <dbReference type="ChEBI" id="CHEBI:30616"/>
    </ligand>
</feature>
<feature type="binding site" evidence="2">
    <location>
        <begin position="109"/>
        <end position="116"/>
    </location>
    <ligand>
        <name>ATP</name>
        <dbReference type="ChEBI" id="CHEBI:30616"/>
    </ligand>
</feature>
<feature type="modified residue" description="N-acetylalanine" evidence="5">
    <location>
        <position position="2"/>
    </location>
</feature>
<feature type="modified residue" description="N6-acetyllysine" evidence="6">
    <location>
        <position position="165"/>
    </location>
</feature>
<feature type="sequence variant" id="VAR_053071" description="In dbSNP:rs12123482.">
    <original>G</original>
    <variation>E</variation>
    <location>
        <position position="106"/>
    </location>
</feature>
<feature type="mutagenesis site" description="Reduced activity, especially towards ATP, GTP and TTP." evidence="1">
    <original>E</original>
    <variation>T</variation>
    <location>
        <position position="114"/>
    </location>
</feature>
<feature type="mutagenesis site" description="Reduced activity, especially towards ATP, GTP and TTP." evidence="1">
    <original>G</original>
    <variation>H</variation>
    <location>
        <position position="116"/>
    </location>
</feature>
<feature type="strand" evidence="7">
    <location>
        <begin position="5"/>
        <end position="9"/>
    </location>
</feature>
<feature type="helix" evidence="7">
    <location>
        <begin position="15"/>
        <end position="28"/>
    </location>
</feature>
<feature type="strand" evidence="7">
    <location>
        <begin position="34"/>
        <end position="37"/>
    </location>
</feature>
<feature type="strand" evidence="7">
    <location>
        <begin position="40"/>
        <end position="42"/>
    </location>
</feature>
<feature type="strand" evidence="7">
    <location>
        <begin position="45"/>
        <end position="54"/>
    </location>
</feature>
<feature type="strand" evidence="7">
    <location>
        <begin position="59"/>
        <end position="64"/>
    </location>
</feature>
<feature type="strand" evidence="7">
    <location>
        <begin position="71"/>
        <end position="73"/>
    </location>
</feature>
<feature type="strand" evidence="7">
    <location>
        <begin position="76"/>
        <end position="83"/>
    </location>
</feature>
<feature type="helix" evidence="7">
    <location>
        <begin position="85"/>
        <end position="89"/>
    </location>
</feature>
<feature type="turn" evidence="7">
    <location>
        <begin position="90"/>
        <end position="96"/>
    </location>
</feature>
<feature type="strand" evidence="7">
    <location>
        <begin position="110"/>
        <end position="112"/>
    </location>
</feature>
<feature type="turn" evidence="7">
    <location>
        <begin position="117"/>
        <end position="121"/>
    </location>
</feature>
<feature type="helix" evidence="7">
    <location>
        <begin position="124"/>
        <end position="134"/>
    </location>
</feature>
<feature type="strand" evidence="7">
    <location>
        <begin position="140"/>
        <end position="143"/>
    </location>
</feature>
<feature type="helix" evidence="7">
    <location>
        <begin position="155"/>
        <end position="159"/>
    </location>
</feature>
<feature type="strand" evidence="7">
    <location>
        <begin position="164"/>
        <end position="168"/>
    </location>
</feature>
<feature type="strand" evidence="7">
    <location>
        <begin position="171"/>
        <end position="173"/>
    </location>
</feature>
<feature type="helix" evidence="7">
    <location>
        <begin position="174"/>
        <end position="176"/>
    </location>
</feature>
<feature type="helix" evidence="7">
    <location>
        <begin position="177"/>
        <end position="185"/>
    </location>
</feature>
<comment type="function">
    <text evidence="1">Has nucleotide phosphatase activity towards ATP, GTP, CTP, TTP and UTP. Hydrolyzes nucleoside diphosphates with lower efficiency.</text>
</comment>
<comment type="catalytic activity">
    <reaction evidence="1">
        <text>a ribonucleoside 5'-triphosphate + H2O = a ribonucleoside 5'-diphosphate + phosphate + H(+)</text>
        <dbReference type="Rhea" id="RHEA:23680"/>
        <dbReference type="ChEBI" id="CHEBI:15377"/>
        <dbReference type="ChEBI" id="CHEBI:15378"/>
        <dbReference type="ChEBI" id="CHEBI:43474"/>
        <dbReference type="ChEBI" id="CHEBI:57930"/>
        <dbReference type="ChEBI" id="CHEBI:61557"/>
        <dbReference type="EC" id="3.6.1.15"/>
    </reaction>
    <physiologicalReaction direction="left-to-right" evidence="3">
        <dbReference type="Rhea" id="RHEA:23681"/>
    </physiologicalReaction>
</comment>
<comment type="catalytic activity">
    <reaction evidence="1">
        <text>5-methyl-UTP + H2O = 5-methyl-UDP + phosphate + H(+)</text>
        <dbReference type="Rhea" id="RHEA:65580"/>
        <dbReference type="ChEBI" id="CHEBI:15377"/>
        <dbReference type="ChEBI" id="CHEBI:15378"/>
        <dbReference type="ChEBI" id="CHEBI:43474"/>
        <dbReference type="ChEBI" id="CHEBI:61417"/>
        <dbReference type="ChEBI" id="CHEBI:63527"/>
    </reaction>
    <physiologicalReaction direction="left-to-right" evidence="3">
        <dbReference type="Rhea" id="RHEA:65581"/>
    </physiologicalReaction>
</comment>
<comment type="catalytic activity">
    <reaction evidence="1">
        <text>CTP + H2O = CDP + phosphate + H(+)</text>
        <dbReference type="Rhea" id="RHEA:29387"/>
        <dbReference type="ChEBI" id="CHEBI:15377"/>
        <dbReference type="ChEBI" id="CHEBI:15378"/>
        <dbReference type="ChEBI" id="CHEBI:37563"/>
        <dbReference type="ChEBI" id="CHEBI:43474"/>
        <dbReference type="ChEBI" id="CHEBI:58069"/>
    </reaction>
    <physiologicalReaction direction="left-to-right" evidence="3">
        <dbReference type="Rhea" id="RHEA:29388"/>
    </physiologicalReaction>
</comment>
<comment type="catalytic activity">
    <reaction evidence="1">
        <text>ATP + H2O = ADP + phosphate + H(+)</text>
        <dbReference type="Rhea" id="RHEA:13065"/>
        <dbReference type="ChEBI" id="CHEBI:15377"/>
        <dbReference type="ChEBI" id="CHEBI:15378"/>
        <dbReference type="ChEBI" id="CHEBI:30616"/>
        <dbReference type="ChEBI" id="CHEBI:43474"/>
        <dbReference type="ChEBI" id="CHEBI:456216"/>
    </reaction>
    <physiologicalReaction direction="left-to-right" evidence="3">
        <dbReference type="Rhea" id="RHEA:13066"/>
    </physiologicalReaction>
</comment>
<comment type="catalytic activity">
    <reaction evidence="1">
        <text>GTP + H2O = GDP + phosphate + H(+)</text>
        <dbReference type="Rhea" id="RHEA:19669"/>
        <dbReference type="ChEBI" id="CHEBI:15377"/>
        <dbReference type="ChEBI" id="CHEBI:15378"/>
        <dbReference type="ChEBI" id="CHEBI:37565"/>
        <dbReference type="ChEBI" id="CHEBI:43474"/>
        <dbReference type="ChEBI" id="CHEBI:58189"/>
    </reaction>
    <physiologicalReaction direction="left-to-right" evidence="3">
        <dbReference type="Rhea" id="RHEA:19670"/>
    </physiologicalReaction>
</comment>
<comment type="biophysicochemical properties">
    <kinetics>
        <KM evidence="1">5 uM for ATP</KM>
        <KM evidence="1">46 uM for ADP</KM>
        <KM evidence="1">4 uM for GTP</KM>
        <KM evidence="1">6 uM for CTP</KM>
        <KM evidence="1">7 uM for TTP</KM>
    </kinetics>
</comment>
<comment type="subunit">
    <text evidence="1">Monomer.</text>
</comment>
<comment type="similarity">
    <text evidence="2">Belongs to the THEP1 NTPase family.</text>
</comment>